<proteinExistence type="inferred from homology"/>
<dbReference type="EMBL" id="AE000516">
    <property type="protein sequence ID" value="AAK46423.1"/>
    <property type="status" value="ALT_INIT"/>
    <property type="molecule type" value="Genomic_DNA"/>
</dbReference>
<dbReference type="PIR" id="C70766">
    <property type="entry name" value="C70766"/>
</dbReference>
<dbReference type="KEGG" id="mtc:MT2141"/>
<dbReference type="HOGENOM" id="CLU_127626_0_0_11"/>
<dbReference type="Proteomes" id="UP000001020">
    <property type="component" value="Chromosome"/>
</dbReference>
<dbReference type="GO" id="GO:0005886">
    <property type="term" value="C:plasma membrane"/>
    <property type="evidence" value="ECO:0007669"/>
    <property type="project" value="UniProtKB-SubCell"/>
</dbReference>
<keyword id="KW-1003">Cell membrane</keyword>
<keyword id="KW-0449">Lipoprotein</keyword>
<keyword id="KW-0472">Membrane</keyword>
<keyword id="KW-0564">Palmitate</keyword>
<keyword id="KW-1185">Reference proteome</keyword>
<keyword id="KW-0732">Signal</keyword>
<sequence length="187" mass="20324">MPHSTADRRLRLTRQALLAAAVVPLLAGCALVMHKPHSAGSSNPWDDSAHPLTDDQAMAQVVEPAKQIVAAADLQAVRAGFSFTSCNDQGDPPYQGTVRMAFLLQGDHDAYFQHVRAAMLSHGWIDGPPPGQYFHGITLHKNGVTANMSLALDHSYGEMILDGECRNTTDHHHDDETTNITNQLVQP</sequence>
<feature type="signal peptide" evidence="2">
    <location>
        <begin position="1"/>
        <end position="28"/>
    </location>
</feature>
<feature type="chain" id="PRO_0000427702" description="Putative lipoprotein LppJ">
    <location>
        <begin position="29"/>
        <end position="187"/>
    </location>
</feature>
<feature type="lipid moiety-binding region" description="N-palmitoyl cysteine" evidence="1">
    <location>
        <position position="29"/>
    </location>
</feature>
<feature type="lipid moiety-binding region" description="S-diacylglycerol cysteine" evidence="1">
    <location>
        <position position="29"/>
    </location>
</feature>
<accession>P9WK76</accession>
<accession>L0TBA5</accession>
<accession>Q10688</accession>
<gene>
    <name type="primary">lppJ</name>
    <name type="ordered locus">MT2141</name>
</gene>
<evidence type="ECO:0000250" key="1"/>
<evidence type="ECO:0000255" key="2"/>
<evidence type="ECO:0000305" key="3"/>
<comment type="subcellular location">
    <subcellularLocation>
        <location evidence="3">Cell membrane</location>
        <topology evidence="3">Lipid-anchor</topology>
    </subcellularLocation>
</comment>
<comment type="sequence caution" evidence="3">
    <conflict type="erroneous initiation">
        <sequence resource="EMBL-CDS" id="AAK46423"/>
    </conflict>
</comment>
<reference key="1">
    <citation type="journal article" date="2002" name="J. Bacteriol.">
        <title>Whole-genome comparison of Mycobacterium tuberculosis clinical and laboratory strains.</title>
        <authorList>
            <person name="Fleischmann R.D."/>
            <person name="Alland D."/>
            <person name="Eisen J.A."/>
            <person name="Carpenter L."/>
            <person name="White O."/>
            <person name="Peterson J.D."/>
            <person name="DeBoy R.T."/>
            <person name="Dodson R.J."/>
            <person name="Gwinn M.L."/>
            <person name="Haft D.H."/>
            <person name="Hickey E.K."/>
            <person name="Kolonay J.F."/>
            <person name="Nelson W.C."/>
            <person name="Umayam L.A."/>
            <person name="Ermolaeva M.D."/>
            <person name="Salzberg S.L."/>
            <person name="Delcher A."/>
            <person name="Utterback T.R."/>
            <person name="Weidman J.F."/>
            <person name="Khouri H.M."/>
            <person name="Gill J."/>
            <person name="Mikula A."/>
            <person name="Bishai W."/>
            <person name="Jacobs W.R. Jr."/>
            <person name="Venter J.C."/>
            <person name="Fraser C.M."/>
        </authorList>
    </citation>
    <scope>NUCLEOTIDE SEQUENCE [LARGE SCALE GENOMIC DNA]</scope>
    <source>
        <strain>CDC 1551 / Oshkosh</strain>
    </source>
</reference>
<protein>
    <recommendedName>
        <fullName>Putative lipoprotein LppJ</fullName>
    </recommendedName>
</protein>
<organism>
    <name type="scientific">Mycobacterium tuberculosis (strain CDC 1551 / Oshkosh)</name>
    <dbReference type="NCBI Taxonomy" id="83331"/>
    <lineage>
        <taxon>Bacteria</taxon>
        <taxon>Bacillati</taxon>
        <taxon>Actinomycetota</taxon>
        <taxon>Actinomycetes</taxon>
        <taxon>Mycobacteriales</taxon>
        <taxon>Mycobacteriaceae</taxon>
        <taxon>Mycobacterium</taxon>
        <taxon>Mycobacterium tuberculosis complex</taxon>
    </lineage>
</organism>
<name>LPPJ_MYCTO</name>